<reference key="1">
    <citation type="submission" date="2006-03" db="EMBL/GenBank/DDBJ databases">
        <title>Complete sequence of Methylobacillus flagellatus KT.</title>
        <authorList>
            <consortium name="US DOE Joint Genome Institute"/>
            <person name="Copeland A."/>
            <person name="Lucas S."/>
            <person name="Lapidus A."/>
            <person name="Barry K."/>
            <person name="Detter J.C."/>
            <person name="Glavina del Rio T."/>
            <person name="Hammon N."/>
            <person name="Israni S."/>
            <person name="Dalin E."/>
            <person name="Tice H."/>
            <person name="Pitluck S."/>
            <person name="Brettin T."/>
            <person name="Bruce D."/>
            <person name="Han C."/>
            <person name="Tapia R."/>
            <person name="Saunders E."/>
            <person name="Gilna P."/>
            <person name="Schmutz J."/>
            <person name="Larimer F."/>
            <person name="Land M."/>
            <person name="Kyrpides N."/>
            <person name="Anderson I."/>
            <person name="Richardson P."/>
        </authorList>
    </citation>
    <scope>NUCLEOTIDE SEQUENCE [LARGE SCALE GENOMIC DNA]</scope>
    <source>
        <strain>ATCC 51484 / DSM 6875 / VKM B-1610 / KT</strain>
    </source>
</reference>
<protein>
    <recommendedName>
        <fullName evidence="1">Ribosomal RNA large subunit methyltransferase E</fullName>
        <ecNumber evidence="1">2.1.1.166</ecNumber>
    </recommendedName>
    <alternativeName>
        <fullName evidence="1">23S rRNA Um2552 methyltransferase</fullName>
    </alternativeName>
    <alternativeName>
        <fullName evidence="1">rRNA (uridine-2'-O-)-methyltransferase</fullName>
    </alternativeName>
</protein>
<comment type="function">
    <text evidence="1">Specifically methylates the uridine in position 2552 of 23S rRNA at the 2'-O position of the ribose in the fully assembled 50S ribosomal subunit.</text>
</comment>
<comment type="catalytic activity">
    <reaction evidence="1">
        <text>uridine(2552) in 23S rRNA + S-adenosyl-L-methionine = 2'-O-methyluridine(2552) in 23S rRNA + S-adenosyl-L-homocysteine + H(+)</text>
        <dbReference type="Rhea" id="RHEA:42720"/>
        <dbReference type="Rhea" id="RHEA-COMP:10202"/>
        <dbReference type="Rhea" id="RHEA-COMP:10203"/>
        <dbReference type="ChEBI" id="CHEBI:15378"/>
        <dbReference type="ChEBI" id="CHEBI:57856"/>
        <dbReference type="ChEBI" id="CHEBI:59789"/>
        <dbReference type="ChEBI" id="CHEBI:65315"/>
        <dbReference type="ChEBI" id="CHEBI:74478"/>
        <dbReference type="EC" id="2.1.1.166"/>
    </reaction>
</comment>
<comment type="subcellular location">
    <subcellularLocation>
        <location evidence="1">Cytoplasm</location>
    </subcellularLocation>
</comment>
<comment type="similarity">
    <text evidence="1">Belongs to the class I-like SAM-binding methyltransferase superfamily. RNA methyltransferase RlmE family.</text>
</comment>
<sequence length="207" mass="23199">MKRRPTSKAWLQEHVNDEFVKRAQRDGYRARAAYKLLEIDDKDQLIKPGMTIVDLGSAPGSWSQVAVQRLAGQGRVIALDILEMPPIPGVEFIQGDFREEEILLVLEKSLNGKPVDLVIADMAPNISGISDVDQARAAYLVELALEFSREWLKPGGNFLVKVFVGSGFDEIVMAMRDSFEKVVTRKPKASRDRSSEVYLLGLKRRNA</sequence>
<keyword id="KW-0963">Cytoplasm</keyword>
<keyword id="KW-0489">Methyltransferase</keyword>
<keyword id="KW-1185">Reference proteome</keyword>
<keyword id="KW-0698">rRNA processing</keyword>
<keyword id="KW-0949">S-adenosyl-L-methionine</keyword>
<keyword id="KW-0808">Transferase</keyword>
<accession>Q1H387</accession>
<name>RLME_METFK</name>
<dbReference type="EC" id="2.1.1.166" evidence="1"/>
<dbReference type="EMBL" id="CP000284">
    <property type="protein sequence ID" value="ABE49050.1"/>
    <property type="molecule type" value="Genomic_DNA"/>
</dbReference>
<dbReference type="RefSeq" id="WP_011479147.1">
    <property type="nucleotide sequence ID" value="NC_007947.1"/>
</dbReference>
<dbReference type="SMR" id="Q1H387"/>
<dbReference type="STRING" id="265072.Mfla_0782"/>
<dbReference type="KEGG" id="mfa:Mfla_0782"/>
<dbReference type="eggNOG" id="COG0293">
    <property type="taxonomic scope" value="Bacteria"/>
</dbReference>
<dbReference type="HOGENOM" id="CLU_009422_4_0_4"/>
<dbReference type="OrthoDB" id="9790080at2"/>
<dbReference type="Proteomes" id="UP000002440">
    <property type="component" value="Chromosome"/>
</dbReference>
<dbReference type="GO" id="GO:0005737">
    <property type="term" value="C:cytoplasm"/>
    <property type="evidence" value="ECO:0007669"/>
    <property type="project" value="UniProtKB-SubCell"/>
</dbReference>
<dbReference type="GO" id="GO:0008650">
    <property type="term" value="F:rRNA (uridine-2'-O-)-methyltransferase activity"/>
    <property type="evidence" value="ECO:0007669"/>
    <property type="project" value="UniProtKB-UniRule"/>
</dbReference>
<dbReference type="FunFam" id="3.40.50.150:FF:000005">
    <property type="entry name" value="Ribosomal RNA large subunit methyltransferase E"/>
    <property type="match status" value="1"/>
</dbReference>
<dbReference type="Gene3D" id="3.40.50.150">
    <property type="entry name" value="Vaccinia Virus protein VP39"/>
    <property type="match status" value="1"/>
</dbReference>
<dbReference type="HAMAP" id="MF_01547">
    <property type="entry name" value="RNA_methyltr_E"/>
    <property type="match status" value="1"/>
</dbReference>
<dbReference type="InterPro" id="IPR050082">
    <property type="entry name" value="RNA_methyltr_RlmE"/>
</dbReference>
<dbReference type="InterPro" id="IPR002877">
    <property type="entry name" value="RNA_MeTrfase_FtsJ_dom"/>
</dbReference>
<dbReference type="InterPro" id="IPR015507">
    <property type="entry name" value="rRNA-MeTfrase_E"/>
</dbReference>
<dbReference type="InterPro" id="IPR029063">
    <property type="entry name" value="SAM-dependent_MTases_sf"/>
</dbReference>
<dbReference type="NCBIfam" id="NF008390">
    <property type="entry name" value="PRK11188.1"/>
    <property type="match status" value="1"/>
</dbReference>
<dbReference type="PANTHER" id="PTHR10920">
    <property type="entry name" value="RIBOSOMAL RNA METHYLTRANSFERASE"/>
    <property type="match status" value="1"/>
</dbReference>
<dbReference type="PANTHER" id="PTHR10920:SF18">
    <property type="entry name" value="RRNA METHYLTRANSFERASE 2, MITOCHONDRIAL"/>
    <property type="match status" value="1"/>
</dbReference>
<dbReference type="Pfam" id="PF01728">
    <property type="entry name" value="FtsJ"/>
    <property type="match status" value="1"/>
</dbReference>
<dbReference type="PIRSF" id="PIRSF005461">
    <property type="entry name" value="23S_rRNA_mtase"/>
    <property type="match status" value="1"/>
</dbReference>
<dbReference type="SUPFAM" id="SSF53335">
    <property type="entry name" value="S-adenosyl-L-methionine-dependent methyltransferases"/>
    <property type="match status" value="1"/>
</dbReference>
<evidence type="ECO:0000255" key="1">
    <source>
        <dbReference type="HAMAP-Rule" id="MF_01547"/>
    </source>
</evidence>
<feature type="chain" id="PRO_0000282762" description="Ribosomal RNA large subunit methyltransferase E">
    <location>
        <begin position="1"/>
        <end position="207"/>
    </location>
</feature>
<feature type="active site" description="Proton acceptor" evidence="1">
    <location>
        <position position="161"/>
    </location>
</feature>
<feature type="binding site" evidence="1">
    <location>
        <position position="60"/>
    </location>
    <ligand>
        <name>S-adenosyl-L-methionine</name>
        <dbReference type="ChEBI" id="CHEBI:59789"/>
    </ligand>
</feature>
<feature type="binding site" evidence="1">
    <location>
        <position position="62"/>
    </location>
    <ligand>
        <name>S-adenosyl-L-methionine</name>
        <dbReference type="ChEBI" id="CHEBI:59789"/>
    </ligand>
</feature>
<feature type="binding site" evidence="1">
    <location>
        <position position="80"/>
    </location>
    <ligand>
        <name>S-adenosyl-L-methionine</name>
        <dbReference type="ChEBI" id="CHEBI:59789"/>
    </ligand>
</feature>
<feature type="binding site" evidence="1">
    <location>
        <position position="96"/>
    </location>
    <ligand>
        <name>S-adenosyl-L-methionine</name>
        <dbReference type="ChEBI" id="CHEBI:59789"/>
    </ligand>
</feature>
<feature type="binding site" evidence="1">
    <location>
        <position position="121"/>
    </location>
    <ligand>
        <name>S-adenosyl-L-methionine</name>
        <dbReference type="ChEBI" id="CHEBI:59789"/>
    </ligand>
</feature>
<gene>
    <name evidence="1" type="primary">rlmE</name>
    <name evidence="1" type="synonym">ftsJ</name>
    <name evidence="1" type="synonym">rrmJ</name>
    <name type="ordered locus">Mfla_0782</name>
</gene>
<organism>
    <name type="scientific">Methylobacillus flagellatus (strain ATCC 51484 / DSM 6875 / VKM B-1610 / KT)</name>
    <dbReference type="NCBI Taxonomy" id="265072"/>
    <lineage>
        <taxon>Bacteria</taxon>
        <taxon>Pseudomonadati</taxon>
        <taxon>Pseudomonadota</taxon>
        <taxon>Betaproteobacteria</taxon>
        <taxon>Nitrosomonadales</taxon>
        <taxon>Methylophilaceae</taxon>
        <taxon>Methylobacillus</taxon>
    </lineage>
</organism>
<proteinExistence type="inferred from homology"/>